<dbReference type="EMBL" id="CP000655">
    <property type="protein sequence ID" value="ABP33247.1"/>
    <property type="molecule type" value="Genomic_DNA"/>
</dbReference>
<dbReference type="RefSeq" id="WP_011901873.1">
    <property type="nucleotide sequence ID" value="NC_009379.1"/>
</dbReference>
<dbReference type="SMR" id="A4SUT3"/>
<dbReference type="GeneID" id="31480361"/>
<dbReference type="KEGG" id="pnu:Pnuc_0025"/>
<dbReference type="eggNOG" id="COG0224">
    <property type="taxonomic scope" value="Bacteria"/>
</dbReference>
<dbReference type="HOGENOM" id="CLU_050669_0_1_4"/>
<dbReference type="Proteomes" id="UP000000231">
    <property type="component" value="Chromosome"/>
</dbReference>
<dbReference type="GO" id="GO:0005886">
    <property type="term" value="C:plasma membrane"/>
    <property type="evidence" value="ECO:0007669"/>
    <property type="project" value="UniProtKB-SubCell"/>
</dbReference>
<dbReference type="GO" id="GO:0045259">
    <property type="term" value="C:proton-transporting ATP synthase complex"/>
    <property type="evidence" value="ECO:0007669"/>
    <property type="project" value="UniProtKB-KW"/>
</dbReference>
<dbReference type="GO" id="GO:0005524">
    <property type="term" value="F:ATP binding"/>
    <property type="evidence" value="ECO:0007669"/>
    <property type="project" value="UniProtKB-UniRule"/>
</dbReference>
<dbReference type="GO" id="GO:0046933">
    <property type="term" value="F:proton-transporting ATP synthase activity, rotational mechanism"/>
    <property type="evidence" value="ECO:0007669"/>
    <property type="project" value="UniProtKB-UniRule"/>
</dbReference>
<dbReference type="GO" id="GO:0042777">
    <property type="term" value="P:proton motive force-driven plasma membrane ATP synthesis"/>
    <property type="evidence" value="ECO:0007669"/>
    <property type="project" value="UniProtKB-UniRule"/>
</dbReference>
<dbReference type="CDD" id="cd12151">
    <property type="entry name" value="F1-ATPase_gamma"/>
    <property type="match status" value="1"/>
</dbReference>
<dbReference type="FunFam" id="1.10.287.80:FF:000005">
    <property type="entry name" value="ATP synthase gamma chain"/>
    <property type="match status" value="1"/>
</dbReference>
<dbReference type="Gene3D" id="3.40.1380.10">
    <property type="match status" value="1"/>
</dbReference>
<dbReference type="Gene3D" id="1.10.287.80">
    <property type="entry name" value="ATP synthase, gamma subunit, helix hairpin domain"/>
    <property type="match status" value="1"/>
</dbReference>
<dbReference type="HAMAP" id="MF_00815">
    <property type="entry name" value="ATP_synth_gamma_bact"/>
    <property type="match status" value="1"/>
</dbReference>
<dbReference type="InterPro" id="IPR035968">
    <property type="entry name" value="ATP_synth_F1_ATPase_gsu"/>
</dbReference>
<dbReference type="InterPro" id="IPR000131">
    <property type="entry name" value="ATP_synth_F1_gsu"/>
</dbReference>
<dbReference type="InterPro" id="IPR023632">
    <property type="entry name" value="ATP_synth_F1_gsu_CS"/>
</dbReference>
<dbReference type="NCBIfam" id="TIGR01146">
    <property type="entry name" value="ATPsyn_F1gamma"/>
    <property type="match status" value="1"/>
</dbReference>
<dbReference type="NCBIfam" id="NF004144">
    <property type="entry name" value="PRK05621.1-1"/>
    <property type="match status" value="1"/>
</dbReference>
<dbReference type="PANTHER" id="PTHR11693">
    <property type="entry name" value="ATP SYNTHASE GAMMA CHAIN"/>
    <property type="match status" value="1"/>
</dbReference>
<dbReference type="PANTHER" id="PTHR11693:SF22">
    <property type="entry name" value="ATP SYNTHASE SUBUNIT GAMMA, MITOCHONDRIAL"/>
    <property type="match status" value="1"/>
</dbReference>
<dbReference type="Pfam" id="PF00231">
    <property type="entry name" value="ATP-synt"/>
    <property type="match status" value="1"/>
</dbReference>
<dbReference type="PRINTS" id="PR00126">
    <property type="entry name" value="ATPASEGAMMA"/>
</dbReference>
<dbReference type="SUPFAM" id="SSF52943">
    <property type="entry name" value="ATP synthase (F1-ATPase), gamma subunit"/>
    <property type="match status" value="1"/>
</dbReference>
<dbReference type="PROSITE" id="PS00153">
    <property type="entry name" value="ATPASE_GAMMA"/>
    <property type="match status" value="1"/>
</dbReference>
<gene>
    <name evidence="1" type="primary">atpG</name>
    <name type="ordered locus">Pnuc_0025</name>
</gene>
<proteinExistence type="inferred from homology"/>
<reference key="1">
    <citation type="journal article" date="2012" name="Stand. Genomic Sci.">
        <title>Complete genome sequence of Polynucleobacter necessarius subsp. asymbioticus type strain (QLW-P1DMWA-1(T)).</title>
        <authorList>
            <person name="Meincke L."/>
            <person name="Copeland A."/>
            <person name="Lapidus A."/>
            <person name="Lucas S."/>
            <person name="Berry K.W."/>
            <person name="Del Rio T.G."/>
            <person name="Hammon N."/>
            <person name="Dalin E."/>
            <person name="Tice H."/>
            <person name="Pitluck S."/>
            <person name="Richardson P."/>
            <person name="Bruce D."/>
            <person name="Goodwin L."/>
            <person name="Han C."/>
            <person name="Tapia R."/>
            <person name="Detter J.C."/>
            <person name="Schmutz J."/>
            <person name="Brettin T."/>
            <person name="Larimer F."/>
            <person name="Land M."/>
            <person name="Hauser L."/>
            <person name="Kyrpides N.C."/>
            <person name="Ivanova N."/>
            <person name="Goker M."/>
            <person name="Woyke T."/>
            <person name="Wu Q.L."/>
            <person name="Pockl M."/>
            <person name="Hahn M.W."/>
            <person name="Klenk H.P."/>
        </authorList>
    </citation>
    <scope>NUCLEOTIDE SEQUENCE [LARGE SCALE GENOMIC DNA]</scope>
    <source>
        <strain>DSM 18221 / CIP 109841 / QLW-P1DMWA-1</strain>
    </source>
</reference>
<name>ATPG_POLAQ</name>
<comment type="function">
    <text evidence="1">Produces ATP from ADP in the presence of a proton gradient across the membrane. The gamma chain is believed to be important in regulating ATPase activity and the flow of protons through the CF(0) complex.</text>
</comment>
<comment type="subunit">
    <text evidence="1">F-type ATPases have 2 components, CF(1) - the catalytic core - and CF(0) - the membrane proton channel. CF(1) has five subunits: alpha(3), beta(3), gamma(1), delta(1), epsilon(1). CF(0) has three main subunits: a, b and c.</text>
</comment>
<comment type="subcellular location">
    <subcellularLocation>
        <location evidence="1">Cell inner membrane</location>
        <topology evidence="1">Peripheral membrane protein</topology>
    </subcellularLocation>
</comment>
<comment type="similarity">
    <text evidence="1">Belongs to the ATPase gamma chain family.</text>
</comment>
<accession>A4SUT3</accession>
<keyword id="KW-0066">ATP synthesis</keyword>
<keyword id="KW-0997">Cell inner membrane</keyword>
<keyword id="KW-1003">Cell membrane</keyword>
<keyword id="KW-0139">CF(1)</keyword>
<keyword id="KW-0375">Hydrogen ion transport</keyword>
<keyword id="KW-0406">Ion transport</keyword>
<keyword id="KW-0472">Membrane</keyword>
<keyword id="KW-1185">Reference proteome</keyword>
<keyword id="KW-0813">Transport</keyword>
<organism>
    <name type="scientific">Polynucleobacter asymbioticus (strain DSM 18221 / CIP 109841 / QLW-P1DMWA-1)</name>
    <name type="common">Polynucleobacter necessarius subsp. asymbioticus</name>
    <dbReference type="NCBI Taxonomy" id="312153"/>
    <lineage>
        <taxon>Bacteria</taxon>
        <taxon>Pseudomonadati</taxon>
        <taxon>Pseudomonadota</taxon>
        <taxon>Betaproteobacteria</taxon>
        <taxon>Burkholderiales</taxon>
        <taxon>Burkholderiaceae</taxon>
        <taxon>Polynucleobacter</taxon>
    </lineage>
</organism>
<protein>
    <recommendedName>
        <fullName evidence="1">ATP synthase gamma chain</fullName>
    </recommendedName>
    <alternativeName>
        <fullName evidence="1">ATP synthase F1 sector gamma subunit</fullName>
    </alternativeName>
    <alternativeName>
        <fullName evidence="1">F-ATPase gamma subunit</fullName>
    </alternativeName>
</protein>
<evidence type="ECO:0000255" key="1">
    <source>
        <dbReference type="HAMAP-Rule" id="MF_00815"/>
    </source>
</evidence>
<feature type="chain" id="PRO_1000083798" description="ATP synthase gamma chain">
    <location>
        <begin position="1"/>
        <end position="289"/>
    </location>
</feature>
<sequence length="289" mass="32214">MASTKEIRSKIKSVQNTRKITKAMEMVAASKMRRAQERMRNARPYAEKIREIVANLSKANPEFRPAYMEAREVKKVGTILVTTDKGLCGGLNTNVLRFITNQVRDLQEKNIEIVYTAIGSKGLQFLNRSKAKLISQTIQIGDTPHMDVLIGAIIAQLEAFERGEIDAVYLAYNRFVNAMKQEPVLEKLLPLEPAALVPEDKAGNSWDYIYEPDAESILNGLLKRYVEAMIYQAVTENMASEQSARMVSMKAASDNAKNVIGELQLEYNKTRQAAITKELSEIVGGAAAV</sequence>